<reference key="1">
    <citation type="journal article" date="2011" name="J. Bacteriol.">
        <title>Comparative genomics of 28 Salmonella enterica isolates: evidence for CRISPR-mediated adaptive sublineage evolution.</title>
        <authorList>
            <person name="Fricke W.F."/>
            <person name="Mammel M.K."/>
            <person name="McDermott P.F."/>
            <person name="Tartera C."/>
            <person name="White D.G."/>
            <person name="Leclerc J.E."/>
            <person name="Ravel J."/>
            <person name="Cebula T.A."/>
        </authorList>
    </citation>
    <scope>NUCLEOTIDE SEQUENCE [LARGE SCALE GENOMIC DNA]</scope>
    <source>
        <strain>SL483</strain>
    </source>
</reference>
<name>SYE_SALA4</name>
<keyword id="KW-0030">Aminoacyl-tRNA synthetase</keyword>
<keyword id="KW-0067">ATP-binding</keyword>
<keyword id="KW-0963">Cytoplasm</keyword>
<keyword id="KW-0436">Ligase</keyword>
<keyword id="KW-0479">Metal-binding</keyword>
<keyword id="KW-0547">Nucleotide-binding</keyword>
<keyword id="KW-0648">Protein biosynthesis</keyword>
<keyword id="KW-0862">Zinc</keyword>
<gene>
    <name evidence="1" type="primary">gltX</name>
    <name type="ordered locus">SeAg_B2558</name>
</gene>
<proteinExistence type="inferred from homology"/>
<protein>
    <recommendedName>
        <fullName evidence="1">Glutamate--tRNA ligase</fullName>
        <ecNumber evidence="1">6.1.1.17</ecNumber>
    </recommendedName>
    <alternativeName>
        <fullName evidence="1">Glutamyl-tRNA synthetase</fullName>
        <shortName evidence="1">GluRS</shortName>
    </alternativeName>
</protein>
<dbReference type="EC" id="6.1.1.17" evidence="1"/>
<dbReference type="EMBL" id="CP001138">
    <property type="protein sequence ID" value="ACH52261.1"/>
    <property type="molecule type" value="Genomic_DNA"/>
</dbReference>
<dbReference type="RefSeq" id="WP_000695623.1">
    <property type="nucleotide sequence ID" value="NC_011149.1"/>
</dbReference>
<dbReference type="SMR" id="B5F0E6"/>
<dbReference type="KEGG" id="sea:SeAg_B2558"/>
<dbReference type="HOGENOM" id="CLU_015768_6_0_6"/>
<dbReference type="Proteomes" id="UP000008819">
    <property type="component" value="Chromosome"/>
</dbReference>
<dbReference type="GO" id="GO:0005829">
    <property type="term" value="C:cytosol"/>
    <property type="evidence" value="ECO:0007669"/>
    <property type="project" value="TreeGrafter"/>
</dbReference>
<dbReference type="GO" id="GO:0005524">
    <property type="term" value="F:ATP binding"/>
    <property type="evidence" value="ECO:0007669"/>
    <property type="project" value="UniProtKB-UniRule"/>
</dbReference>
<dbReference type="GO" id="GO:0004818">
    <property type="term" value="F:glutamate-tRNA ligase activity"/>
    <property type="evidence" value="ECO:0007669"/>
    <property type="project" value="UniProtKB-UniRule"/>
</dbReference>
<dbReference type="GO" id="GO:0000049">
    <property type="term" value="F:tRNA binding"/>
    <property type="evidence" value="ECO:0007669"/>
    <property type="project" value="InterPro"/>
</dbReference>
<dbReference type="GO" id="GO:0008270">
    <property type="term" value="F:zinc ion binding"/>
    <property type="evidence" value="ECO:0007669"/>
    <property type="project" value="UniProtKB-UniRule"/>
</dbReference>
<dbReference type="GO" id="GO:0006424">
    <property type="term" value="P:glutamyl-tRNA aminoacylation"/>
    <property type="evidence" value="ECO:0007669"/>
    <property type="project" value="UniProtKB-UniRule"/>
</dbReference>
<dbReference type="CDD" id="cd00808">
    <property type="entry name" value="GluRS_core"/>
    <property type="match status" value="1"/>
</dbReference>
<dbReference type="FunFam" id="1.10.10.350:FF:000001">
    <property type="entry name" value="Glutamate--tRNA ligase"/>
    <property type="match status" value="1"/>
</dbReference>
<dbReference type="FunFam" id="3.40.50.620:FF:000007">
    <property type="entry name" value="Glutamate--tRNA ligase"/>
    <property type="match status" value="1"/>
</dbReference>
<dbReference type="Gene3D" id="1.10.10.350">
    <property type="match status" value="1"/>
</dbReference>
<dbReference type="Gene3D" id="3.40.50.620">
    <property type="entry name" value="HUPs"/>
    <property type="match status" value="1"/>
</dbReference>
<dbReference type="HAMAP" id="MF_00022">
    <property type="entry name" value="Glu_tRNA_synth_type1"/>
    <property type="match status" value="1"/>
</dbReference>
<dbReference type="InterPro" id="IPR045462">
    <property type="entry name" value="aa-tRNA-synth_I_cd-bd"/>
</dbReference>
<dbReference type="InterPro" id="IPR020751">
    <property type="entry name" value="aa-tRNA-synth_I_codon-bd_sub2"/>
</dbReference>
<dbReference type="InterPro" id="IPR001412">
    <property type="entry name" value="aa-tRNA-synth_I_CS"/>
</dbReference>
<dbReference type="InterPro" id="IPR008925">
    <property type="entry name" value="aa_tRNA-synth_I_cd-bd_sf"/>
</dbReference>
<dbReference type="InterPro" id="IPR004527">
    <property type="entry name" value="Glu-tRNA-ligase_bac/mito"/>
</dbReference>
<dbReference type="InterPro" id="IPR000924">
    <property type="entry name" value="Glu/Gln-tRNA-synth"/>
</dbReference>
<dbReference type="InterPro" id="IPR020058">
    <property type="entry name" value="Glu/Gln-tRNA-synth_Ib_cat-dom"/>
</dbReference>
<dbReference type="InterPro" id="IPR049940">
    <property type="entry name" value="GluQ/Sye"/>
</dbReference>
<dbReference type="InterPro" id="IPR033910">
    <property type="entry name" value="GluRS_core"/>
</dbReference>
<dbReference type="InterPro" id="IPR014729">
    <property type="entry name" value="Rossmann-like_a/b/a_fold"/>
</dbReference>
<dbReference type="NCBIfam" id="TIGR00464">
    <property type="entry name" value="gltX_bact"/>
    <property type="match status" value="1"/>
</dbReference>
<dbReference type="PANTHER" id="PTHR43311">
    <property type="entry name" value="GLUTAMATE--TRNA LIGASE"/>
    <property type="match status" value="1"/>
</dbReference>
<dbReference type="PANTHER" id="PTHR43311:SF2">
    <property type="entry name" value="GLUTAMATE--TRNA LIGASE, MITOCHONDRIAL-RELATED"/>
    <property type="match status" value="1"/>
</dbReference>
<dbReference type="Pfam" id="PF19269">
    <property type="entry name" value="Anticodon_2"/>
    <property type="match status" value="1"/>
</dbReference>
<dbReference type="Pfam" id="PF00749">
    <property type="entry name" value="tRNA-synt_1c"/>
    <property type="match status" value="1"/>
</dbReference>
<dbReference type="PRINTS" id="PR00987">
    <property type="entry name" value="TRNASYNTHGLU"/>
</dbReference>
<dbReference type="SUPFAM" id="SSF48163">
    <property type="entry name" value="An anticodon-binding domain of class I aminoacyl-tRNA synthetases"/>
    <property type="match status" value="1"/>
</dbReference>
<dbReference type="SUPFAM" id="SSF52374">
    <property type="entry name" value="Nucleotidylyl transferase"/>
    <property type="match status" value="1"/>
</dbReference>
<dbReference type="PROSITE" id="PS00178">
    <property type="entry name" value="AA_TRNA_LIGASE_I"/>
    <property type="match status" value="1"/>
</dbReference>
<feature type="chain" id="PRO_1000090100" description="Glutamate--tRNA ligase">
    <location>
        <begin position="1"/>
        <end position="471"/>
    </location>
</feature>
<feature type="short sequence motif" description="'HIGH' region" evidence="1">
    <location>
        <begin position="9"/>
        <end position="19"/>
    </location>
</feature>
<feature type="short sequence motif" description="'KMSKS' region" evidence="1">
    <location>
        <begin position="237"/>
        <end position="241"/>
    </location>
</feature>
<feature type="binding site" evidence="1">
    <location>
        <position position="98"/>
    </location>
    <ligand>
        <name>Zn(2+)</name>
        <dbReference type="ChEBI" id="CHEBI:29105"/>
    </ligand>
</feature>
<feature type="binding site" evidence="1">
    <location>
        <position position="100"/>
    </location>
    <ligand>
        <name>Zn(2+)</name>
        <dbReference type="ChEBI" id="CHEBI:29105"/>
    </ligand>
</feature>
<feature type="binding site" evidence="1">
    <location>
        <position position="125"/>
    </location>
    <ligand>
        <name>Zn(2+)</name>
        <dbReference type="ChEBI" id="CHEBI:29105"/>
    </ligand>
</feature>
<feature type="binding site" evidence="1">
    <location>
        <position position="127"/>
    </location>
    <ligand>
        <name>Zn(2+)</name>
        <dbReference type="ChEBI" id="CHEBI:29105"/>
    </ligand>
</feature>
<feature type="binding site" evidence="1">
    <location>
        <position position="240"/>
    </location>
    <ligand>
        <name>ATP</name>
        <dbReference type="ChEBI" id="CHEBI:30616"/>
    </ligand>
</feature>
<organism>
    <name type="scientific">Salmonella agona (strain SL483)</name>
    <dbReference type="NCBI Taxonomy" id="454166"/>
    <lineage>
        <taxon>Bacteria</taxon>
        <taxon>Pseudomonadati</taxon>
        <taxon>Pseudomonadota</taxon>
        <taxon>Gammaproteobacteria</taxon>
        <taxon>Enterobacterales</taxon>
        <taxon>Enterobacteriaceae</taxon>
        <taxon>Salmonella</taxon>
    </lineage>
</organism>
<comment type="function">
    <text evidence="1">Catalyzes the attachment of glutamate to tRNA(Glu) in a two-step reaction: glutamate is first activated by ATP to form Glu-AMP and then transferred to the acceptor end of tRNA(Glu).</text>
</comment>
<comment type="catalytic activity">
    <reaction evidence="1">
        <text>tRNA(Glu) + L-glutamate + ATP = L-glutamyl-tRNA(Glu) + AMP + diphosphate</text>
        <dbReference type="Rhea" id="RHEA:23540"/>
        <dbReference type="Rhea" id="RHEA-COMP:9663"/>
        <dbReference type="Rhea" id="RHEA-COMP:9680"/>
        <dbReference type="ChEBI" id="CHEBI:29985"/>
        <dbReference type="ChEBI" id="CHEBI:30616"/>
        <dbReference type="ChEBI" id="CHEBI:33019"/>
        <dbReference type="ChEBI" id="CHEBI:78442"/>
        <dbReference type="ChEBI" id="CHEBI:78520"/>
        <dbReference type="ChEBI" id="CHEBI:456215"/>
        <dbReference type="EC" id="6.1.1.17"/>
    </reaction>
</comment>
<comment type="cofactor">
    <cofactor evidence="1">
        <name>Zn(2+)</name>
        <dbReference type="ChEBI" id="CHEBI:29105"/>
    </cofactor>
    <text evidence="1">Binds 1 zinc ion per subunit.</text>
</comment>
<comment type="subunit">
    <text evidence="1">Monomer.</text>
</comment>
<comment type="subcellular location">
    <subcellularLocation>
        <location evidence="1">Cytoplasm</location>
    </subcellularLocation>
</comment>
<comment type="similarity">
    <text evidence="1">Belongs to the class-I aminoacyl-tRNA synthetase family. Glutamate--tRNA ligase type 1 subfamily.</text>
</comment>
<sequence length="471" mass="53634">MKIKTRFAPSPTGYLHVGGARTALYSWLFARHHGGEFVLRIEDTDLERSTPEAIEAIMDGMNWLNLEWDEGPYFQTKRFDRYNAVIDEMLEAGTAYKCYCSKERLEQLREDQMAKGEKPRYDGRCRHSHEHHADDEPCVVRFANPQDGSVIFDDQIRGPIEFSNQELDDLIIRRTDGSPTYNFCVVVDDWDMEITHVIRGEDHINNTPRQINILKALNAPVPMYAHVSMINGDDGKKLSKRHGAVSVMQYRDDGYLPEALLNYLVRLGWSSGDQEIFTREEMIKLFSLGAVSKSASAFNTDKLLWLNHHYINTLAPEYVATHLQWHIEQENIDTRNGPQLAELVKLLGERCKTLKEMAQSCRYFYEDFSEFDADAAKKHLRPVARQPLEVVRDKLSAITDWSAENVHHAIQATADELEVGMGKVGMPLRVAVTGAGQSPALDVTVHAIGKTRSIERINKALGFIAERESQQ</sequence>
<accession>B5F0E6</accession>
<evidence type="ECO:0000255" key="1">
    <source>
        <dbReference type="HAMAP-Rule" id="MF_00022"/>
    </source>
</evidence>